<reference key="1">
    <citation type="journal article" date="2004" name="Proc. Natl. Acad. Sci. U.S.A.">
        <title>The complete genomic sequence of Nocardia farcinica IFM 10152.</title>
        <authorList>
            <person name="Ishikawa J."/>
            <person name="Yamashita A."/>
            <person name="Mikami Y."/>
            <person name="Hoshino Y."/>
            <person name="Kurita H."/>
            <person name="Hotta K."/>
            <person name="Shiba T."/>
            <person name="Hattori M."/>
        </authorList>
    </citation>
    <scope>NUCLEOTIDE SEQUENCE [LARGE SCALE GENOMIC DNA]</scope>
    <source>
        <strain>IFM 10152</strain>
    </source>
</reference>
<feature type="chain" id="PRO_0000072970" description="Glycine--tRNA ligase">
    <location>
        <begin position="1"/>
        <end position="466"/>
    </location>
</feature>
<feature type="binding site" evidence="1">
    <location>
        <position position="105"/>
    </location>
    <ligand>
        <name>substrate</name>
    </ligand>
</feature>
<feature type="binding site" evidence="1">
    <location>
        <position position="168"/>
    </location>
    <ligand>
        <name>substrate</name>
    </ligand>
</feature>
<feature type="binding site" evidence="1">
    <location>
        <begin position="200"/>
        <end position="202"/>
    </location>
    <ligand>
        <name>ATP</name>
        <dbReference type="ChEBI" id="CHEBI:30616"/>
    </ligand>
</feature>
<feature type="binding site" evidence="1">
    <location>
        <begin position="210"/>
        <end position="215"/>
    </location>
    <ligand>
        <name>ATP</name>
        <dbReference type="ChEBI" id="CHEBI:30616"/>
    </ligand>
</feature>
<feature type="binding site" evidence="1">
    <location>
        <begin position="215"/>
        <end position="219"/>
    </location>
    <ligand>
        <name>substrate</name>
    </ligand>
</feature>
<feature type="binding site" evidence="1">
    <location>
        <begin position="287"/>
        <end position="288"/>
    </location>
    <ligand>
        <name>ATP</name>
        <dbReference type="ChEBI" id="CHEBI:30616"/>
    </ligand>
</feature>
<feature type="binding site" evidence="1">
    <location>
        <begin position="327"/>
        <end position="331"/>
    </location>
    <ligand>
        <name>substrate</name>
    </ligand>
</feature>
<feature type="binding site" evidence="1">
    <location>
        <begin position="331"/>
        <end position="334"/>
    </location>
    <ligand>
        <name>ATP</name>
        <dbReference type="ChEBI" id="CHEBI:30616"/>
    </ligand>
</feature>
<evidence type="ECO:0000255" key="1">
    <source>
        <dbReference type="HAMAP-Rule" id="MF_00253"/>
    </source>
</evidence>
<protein>
    <recommendedName>
        <fullName evidence="1">Glycine--tRNA ligase</fullName>
        <ecNumber evidence="1">6.1.1.14</ecNumber>
    </recommendedName>
    <alternativeName>
        <fullName evidence="1">Glycyl-tRNA synthetase</fullName>
        <shortName evidence="1">GlyRS</shortName>
    </alternativeName>
</protein>
<accession>Q5YZT7</accession>
<comment type="function">
    <text evidence="1">Catalyzes the attachment of glycine to tRNA(Gly).</text>
</comment>
<comment type="catalytic activity">
    <reaction evidence="1">
        <text>tRNA(Gly) + glycine + ATP = glycyl-tRNA(Gly) + AMP + diphosphate</text>
        <dbReference type="Rhea" id="RHEA:16013"/>
        <dbReference type="Rhea" id="RHEA-COMP:9664"/>
        <dbReference type="Rhea" id="RHEA-COMP:9683"/>
        <dbReference type="ChEBI" id="CHEBI:30616"/>
        <dbReference type="ChEBI" id="CHEBI:33019"/>
        <dbReference type="ChEBI" id="CHEBI:57305"/>
        <dbReference type="ChEBI" id="CHEBI:78442"/>
        <dbReference type="ChEBI" id="CHEBI:78522"/>
        <dbReference type="ChEBI" id="CHEBI:456215"/>
        <dbReference type="EC" id="6.1.1.14"/>
    </reaction>
</comment>
<comment type="subunit">
    <text evidence="1">Homodimer.</text>
</comment>
<comment type="subcellular location">
    <subcellularLocation>
        <location evidence="1">Cytoplasm</location>
    </subcellularLocation>
</comment>
<comment type="similarity">
    <text evidence="1">Belongs to the class-II aminoacyl-tRNA synthetase family.</text>
</comment>
<keyword id="KW-0030">Aminoacyl-tRNA synthetase</keyword>
<keyword id="KW-0067">ATP-binding</keyword>
<keyword id="KW-0963">Cytoplasm</keyword>
<keyword id="KW-0436">Ligase</keyword>
<keyword id="KW-0547">Nucleotide-binding</keyword>
<keyword id="KW-0648">Protein biosynthesis</keyword>
<keyword id="KW-1185">Reference proteome</keyword>
<organism>
    <name type="scientific">Nocardia farcinica (strain IFM 10152)</name>
    <dbReference type="NCBI Taxonomy" id="247156"/>
    <lineage>
        <taxon>Bacteria</taxon>
        <taxon>Bacillati</taxon>
        <taxon>Actinomycetota</taxon>
        <taxon>Actinomycetes</taxon>
        <taxon>Mycobacteriales</taxon>
        <taxon>Nocardiaceae</taxon>
        <taxon>Nocardia</taxon>
    </lineage>
</organism>
<dbReference type="EC" id="6.1.1.14" evidence="1"/>
<dbReference type="EMBL" id="AP006618">
    <property type="protein sequence ID" value="BAD56304.1"/>
    <property type="molecule type" value="Genomic_DNA"/>
</dbReference>
<dbReference type="SMR" id="Q5YZT7"/>
<dbReference type="STRING" id="247156.NFA_14590"/>
<dbReference type="KEGG" id="nfa:NFA_14590"/>
<dbReference type="eggNOG" id="COG0423">
    <property type="taxonomic scope" value="Bacteria"/>
</dbReference>
<dbReference type="HOGENOM" id="CLU_015515_2_1_11"/>
<dbReference type="Proteomes" id="UP000006820">
    <property type="component" value="Chromosome"/>
</dbReference>
<dbReference type="GO" id="GO:0005737">
    <property type="term" value="C:cytoplasm"/>
    <property type="evidence" value="ECO:0007669"/>
    <property type="project" value="UniProtKB-SubCell"/>
</dbReference>
<dbReference type="GO" id="GO:0005524">
    <property type="term" value="F:ATP binding"/>
    <property type="evidence" value="ECO:0007669"/>
    <property type="project" value="UniProtKB-UniRule"/>
</dbReference>
<dbReference type="GO" id="GO:0004820">
    <property type="term" value="F:glycine-tRNA ligase activity"/>
    <property type="evidence" value="ECO:0000250"/>
    <property type="project" value="UniProtKB"/>
</dbReference>
<dbReference type="GO" id="GO:0046983">
    <property type="term" value="F:protein dimerization activity"/>
    <property type="evidence" value="ECO:0000250"/>
    <property type="project" value="UniProtKB"/>
</dbReference>
<dbReference type="GO" id="GO:0006426">
    <property type="term" value="P:glycyl-tRNA aminoacylation"/>
    <property type="evidence" value="ECO:0007669"/>
    <property type="project" value="UniProtKB-UniRule"/>
</dbReference>
<dbReference type="CDD" id="cd00774">
    <property type="entry name" value="GlyRS-like_core"/>
    <property type="match status" value="1"/>
</dbReference>
<dbReference type="CDD" id="cd00858">
    <property type="entry name" value="GlyRS_anticodon"/>
    <property type="match status" value="1"/>
</dbReference>
<dbReference type="FunFam" id="3.40.50.800:FF:000002">
    <property type="entry name" value="Glycine--tRNA ligase"/>
    <property type="match status" value="1"/>
</dbReference>
<dbReference type="Gene3D" id="3.40.50.800">
    <property type="entry name" value="Anticodon-binding domain"/>
    <property type="match status" value="1"/>
</dbReference>
<dbReference type="Gene3D" id="3.30.930.10">
    <property type="entry name" value="Bira Bifunctional Protein, Domain 2"/>
    <property type="match status" value="1"/>
</dbReference>
<dbReference type="HAMAP" id="MF_00253_B">
    <property type="entry name" value="Gly_tRNA_synth_B"/>
    <property type="match status" value="1"/>
</dbReference>
<dbReference type="InterPro" id="IPR002314">
    <property type="entry name" value="aa-tRNA-synt_IIb"/>
</dbReference>
<dbReference type="InterPro" id="IPR006195">
    <property type="entry name" value="aa-tRNA-synth_II"/>
</dbReference>
<dbReference type="InterPro" id="IPR045864">
    <property type="entry name" value="aa-tRNA-synth_II/BPL/LPL"/>
</dbReference>
<dbReference type="InterPro" id="IPR004154">
    <property type="entry name" value="Anticodon-bd"/>
</dbReference>
<dbReference type="InterPro" id="IPR036621">
    <property type="entry name" value="Anticodon-bd_dom_sf"/>
</dbReference>
<dbReference type="InterPro" id="IPR027031">
    <property type="entry name" value="Gly-tRNA_synthase/POLG2"/>
</dbReference>
<dbReference type="InterPro" id="IPR022961">
    <property type="entry name" value="Gly_tRNA_ligase_bac"/>
</dbReference>
<dbReference type="InterPro" id="IPR033731">
    <property type="entry name" value="GlyRS-like_core"/>
</dbReference>
<dbReference type="InterPro" id="IPR002315">
    <property type="entry name" value="tRNA-synt_gly"/>
</dbReference>
<dbReference type="NCBIfam" id="TIGR00389">
    <property type="entry name" value="glyS_dimeric"/>
    <property type="match status" value="1"/>
</dbReference>
<dbReference type="NCBIfam" id="NF003211">
    <property type="entry name" value="PRK04173.1"/>
    <property type="match status" value="1"/>
</dbReference>
<dbReference type="PANTHER" id="PTHR10745:SF8">
    <property type="entry name" value="DNA POLYMERASE SUBUNIT GAMMA-2, MITOCHONDRIAL"/>
    <property type="match status" value="1"/>
</dbReference>
<dbReference type="PANTHER" id="PTHR10745">
    <property type="entry name" value="GLYCYL-TRNA SYNTHETASE/DNA POLYMERASE SUBUNIT GAMMA-2"/>
    <property type="match status" value="1"/>
</dbReference>
<dbReference type="Pfam" id="PF03129">
    <property type="entry name" value="HGTP_anticodon"/>
    <property type="match status" value="1"/>
</dbReference>
<dbReference type="Pfam" id="PF00587">
    <property type="entry name" value="tRNA-synt_2b"/>
    <property type="match status" value="1"/>
</dbReference>
<dbReference type="PRINTS" id="PR01043">
    <property type="entry name" value="TRNASYNTHGLY"/>
</dbReference>
<dbReference type="SUPFAM" id="SSF52954">
    <property type="entry name" value="Class II aaRS ABD-related"/>
    <property type="match status" value="1"/>
</dbReference>
<dbReference type="SUPFAM" id="SSF55681">
    <property type="entry name" value="Class II aaRS and biotin synthetases"/>
    <property type="match status" value="1"/>
</dbReference>
<dbReference type="PROSITE" id="PS50862">
    <property type="entry name" value="AA_TRNA_LIGASE_II"/>
    <property type="match status" value="1"/>
</dbReference>
<proteinExistence type="inferred from homology"/>
<sequence length="466" mass="53377">MEKSRVAPKSKVDTVANLAKRRGLVYPCGEIYGGTKSAWDYGPLGVELKENIKRQWWRSMVTSREDVVGLDSSVILPRQVWEASGHVATFTDPLVESLITHKRYRADHLLEAYEEKHGHPPANGLADIRDPETGEPGRWTEPRNFSGLLKTFLGPVDDEEGLHYLRPETAQGIFINYKNVETTARKKPPFGIAQIGKSFRNEITPGNFIFRTREFEQMEMEFFVKPGEDEQWHQYWIDTRLAWYTDLGIDPENLRLYEHPKEKLSHYSTRTVDIEYRFRFQGSEWGELEGVANRTDYDLKTHSEHSGTELSYFDQANNERYIPYVIEPAAGLTRSLMAFLVDAYAEDEAPNAKGGVDVRTVLRLDRRLAPVKAAVLPLSRNADLTPKAKDLAAQLRKHWNVEFDDAGAIGRRYRRQDEIGTPFCITVDFDTLEDQAVTIRERDSMAQERIALDKVEGYLAQHLIGV</sequence>
<name>SYG_NOCFA</name>
<gene>
    <name evidence="1" type="primary">glyQS</name>
    <name type="synonym">glyS</name>
    <name type="ordered locus">NFA_14590</name>
</gene>